<feature type="chain" id="PRO_0000410552" description="Uncharacterized protein 078L">
    <location>
        <begin position="1"/>
        <end position="212"/>
    </location>
</feature>
<name>078L_FRG3G</name>
<proteinExistence type="predicted"/>
<reference key="1">
    <citation type="journal article" date="2004" name="Virology">
        <title>Comparative genomic analyses of frog virus 3, type species of the genus Ranavirus (family Iridoviridae).</title>
        <authorList>
            <person name="Tan W.G."/>
            <person name="Barkman T.J."/>
            <person name="Gregory Chinchar V."/>
            <person name="Essani K."/>
        </authorList>
    </citation>
    <scope>NUCLEOTIDE SEQUENCE [LARGE SCALE GENOMIC DNA]</scope>
</reference>
<sequence length="212" mass="23985">MSIGETFAISAHPEGGALFGTISPGMWNQDFIPWIRKTAVDGHLLIVSGSESELGAWRELGARGLSYDEFTFLCPGDRMVWLSEPTEEWLARKRAPMWRCQAVWIQTEKCRLGKNADATLGRAAPHTDAEHLMGMMEGIRELNVHEPQTMVIVSKIGHKNYFSAAGLVTVSFADLAIRPARWVKDRVFAVVRRDDWESDRFRGLCYKWGIEM</sequence>
<keyword id="KW-1185">Reference proteome</keyword>
<organismHost>
    <name type="scientific">Dryophytes versicolor</name>
    <name type="common">chameleon treefrog</name>
    <dbReference type="NCBI Taxonomy" id="30343"/>
</organismHost>
<organismHost>
    <name type="scientific">Lithobates pipiens</name>
    <name type="common">Northern leopard frog</name>
    <name type="synonym">Rana pipiens</name>
    <dbReference type="NCBI Taxonomy" id="8404"/>
</organismHost>
<organismHost>
    <name type="scientific">Lithobates sylvaticus</name>
    <name type="common">Wood frog</name>
    <name type="synonym">Rana sylvatica</name>
    <dbReference type="NCBI Taxonomy" id="45438"/>
</organismHost>
<organismHost>
    <name type="scientific">Notophthalmus viridescens</name>
    <name type="common">Eastern newt</name>
    <name type="synonym">Triturus viridescens</name>
    <dbReference type="NCBI Taxonomy" id="8316"/>
</organismHost>
<accession>Q6GZP7</accession>
<gene>
    <name type="ORF">FV3-078L</name>
</gene>
<dbReference type="EMBL" id="AY548484">
    <property type="protein sequence ID" value="AAT09738.1"/>
    <property type="molecule type" value="Genomic_DNA"/>
</dbReference>
<dbReference type="RefSeq" id="YP_031657.1">
    <property type="nucleotide sequence ID" value="NC_005946.1"/>
</dbReference>
<dbReference type="KEGG" id="vg:2947797"/>
<dbReference type="Proteomes" id="UP000008770">
    <property type="component" value="Segment"/>
</dbReference>
<organism>
    <name type="scientific">Frog virus 3 (isolate Goorha)</name>
    <name type="common">FV-3</name>
    <dbReference type="NCBI Taxonomy" id="654924"/>
    <lineage>
        <taxon>Viruses</taxon>
        <taxon>Varidnaviria</taxon>
        <taxon>Bamfordvirae</taxon>
        <taxon>Nucleocytoviricota</taxon>
        <taxon>Megaviricetes</taxon>
        <taxon>Pimascovirales</taxon>
        <taxon>Iridoviridae</taxon>
        <taxon>Alphairidovirinae</taxon>
        <taxon>Ranavirus</taxon>
        <taxon>Frog virus 3</taxon>
    </lineage>
</organism>
<protein>
    <recommendedName>
        <fullName>Uncharacterized protein 078L</fullName>
    </recommendedName>
</protein>